<feature type="peptide" id="PRO_0000043972" description="Lantibiotic duramycin C">
    <location>
        <begin position="1"/>
        <end position="19"/>
    </location>
</feature>
<feature type="modified residue" description="(3R)-3-hydroxyaspartate" evidence="1 2">
    <location>
        <position position="15"/>
    </location>
</feature>
<feature type="cross-link" description="Beta-methyllanthionine (Cys-Thr)">
    <location>
        <begin position="1"/>
        <end position="18"/>
    </location>
</feature>
<feature type="cross-link" description="Lanthionine (Ser-Cys)">
    <location>
        <begin position="4"/>
        <end position="14"/>
    </location>
</feature>
<feature type="cross-link" description="Beta-methyllanthionine (Cys-Thr)">
    <location>
        <begin position="5"/>
        <end position="11"/>
    </location>
</feature>
<feature type="cross-link" description="Lysinoalanine (Ser-Lys)">
    <location>
        <begin position="6"/>
        <end position="19"/>
    </location>
</feature>
<reference key="1">
    <citation type="journal article" date="1990" name="J. Antibiot.">
        <title>Duramycins B and C, two new lanthionine containing antibiotics as inhibitors of phospholipase A2. Structural revision of duramycin and cinnamycin.</title>
        <authorList>
            <person name="Fredenhagen A."/>
            <person name="Fendrich G."/>
            <person name="Marki F."/>
            <person name="Marki W."/>
            <person name="Gruner J."/>
            <person name="Raschdorf F."/>
            <person name="Peter H.H."/>
        </authorList>
    </citation>
    <scope>PROTEIN SEQUENCE</scope>
    <scope>FUNCTION</scope>
    <scope>MASS SPECTROMETRY</scope>
    <scope>CROSS-LINKS</scope>
    <scope>HYDROXYLATION AT ASP-15</scope>
    <scope>SUBCELLULAR LOCATION</scope>
    <source>
        <strain>R2107</strain>
    </source>
</reference>
<reference key="2">
    <citation type="book" date="1993" name="Peptides 1992">
        <title>Solution structure of the lantibiotics duramycin B and C.</title>
        <editorList>
            <person name="Schneider C.H."/>
            <person name="Eberles A.N."/>
        </editorList>
        <authorList>
            <person name="Zimmermann N."/>
            <person name="Freund S."/>
            <person name="Fredenhagen A."/>
            <person name="Jung G."/>
        </authorList>
    </citation>
    <scope>STRUCTURE BY NMR</scope>
    <source>
        <strain>R2107</strain>
    </source>
</reference>
<reference key="3">
    <citation type="journal article" date="1993" name="Eur. J. Biochem.">
        <title>Solution structures of the lantibiotics duramycin B and C.</title>
        <authorList>
            <person name="Zimmermann N."/>
            <person name="Freund S."/>
            <person name="Fredenhagen A."/>
            <person name="Jung G."/>
        </authorList>
    </citation>
    <scope>STRUCTURE BY NMR</scope>
    <scope>MASS SPECTROMETRY</scope>
    <scope>CROSS-LINKS</scope>
    <scope>HYDROXYLATION AT ASP-15</scope>
    <scope>CONFIGURATION OF STEREOCENTERS</scope>
    <scope>SUBCELLULAR LOCATION</scope>
    <source>
        <strain>R2107</strain>
    </source>
</reference>
<name>DURC_STRGP</name>
<proteinExistence type="evidence at protein level"/>
<evidence type="ECO:0000269" key="1">
    <source>
    </source>
</evidence>
<evidence type="ECO:0000269" key="2">
    <source>
    </source>
</evidence>
<evidence type="ECO:0000305" key="3"/>
<evidence type="ECO:0000305" key="4">
    <source>
    </source>
</evidence>
<evidence type="ECO:0000305" key="5">
    <source>
    </source>
</evidence>
<organism>
    <name type="scientific">Streptomyces griseoluteus</name>
    <dbReference type="NCBI Taxonomy" id="29306"/>
    <lineage>
        <taxon>Bacteria</taxon>
        <taxon>Bacillati</taxon>
        <taxon>Actinomycetota</taxon>
        <taxon>Actinomycetes</taxon>
        <taxon>Kitasatosporales</taxon>
        <taxon>Streptomycetaceae</taxon>
        <taxon>Streptomyces</taxon>
    </lineage>
</organism>
<keyword id="KW-0044">Antibiotic</keyword>
<keyword id="KW-0929">Antimicrobial</keyword>
<keyword id="KW-0078">Bacteriocin</keyword>
<keyword id="KW-0903">Direct protein sequencing</keyword>
<keyword id="KW-0379">Hydroxylation</keyword>
<keyword id="KW-0425">Lantibiotic</keyword>
<keyword id="KW-0964">Secreted</keyword>
<keyword id="KW-0883">Thioether bond</keyword>
<comment type="function">
    <text evidence="1">Is a potent inhibitor of human phospholipase A2. Exhibits only a weak antibacterial activity against B.subtilis, and does not display antimicrobial activity against S.aureus, S.mitis, E.coli, K.pneumoniae, P.vulgaris and C.albicans.</text>
</comment>
<comment type="subcellular location">
    <subcellularLocation>
        <location evidence="4 5">Secreted</location>
    </subcellularLocation>
</comment>
<comment type="PTM">
    <text>Maturation of lantibiotics involves the enzymatic conversion of Thr, and Ser into dehydrated AA and the formation of thioether bonds with cysteine or the formation of dialkylamine bonds with lysine. This is followed by membrane translocation and cleavage of the modified precursor.</text>
</comment>
<comment type="mass spectrometry"/>
<comment type="mass spectrometry"/>
<comment type="similarity">
    <text evidence="3">Belongs to the type B lantibiotic family.</text>
</comment>
<accession>P36503</accession>
<protein>
    <recommendedName>
        <fullName>Lantibiotic duramycin C</fullName>
    </recommendedName>
</protein>
<dbReference type="GO" id="GO:0005576">
    <property type="term" value="C:extracellular region"/>
    <property type="evidence" value="ECO:0007669"/>
    <property type="project" value="UniProtKB-SubCell"/>
</dbReference>
<dbReference type="GO" id="GO:0005102">
    <property type="term" value="F:signaling receptor binding"/>
    <property type="evidence" value="ECO:0007669"/>
    <property type="project" value="UniProtKB-KW"/>
</dbReference>
<dbReference type="GO" id="GO:0042742">
    <property type="term" value="P:defense response to bacterium"/>
    <property type="evidence" value="ECO:0007669"/>
    <property type="project" value="UniProtKB-KW"/>
</dbReference>
<dbReference type="GO" id="GO:0031640">
    <property type="term" value="P:killing of cells of another organism"/>
    <property type="evidence" value="ECO:0007669"/>
    <property type="project" value="UniProtKB-KW"/>
</dbReference>
<sequence>CANSCSYGPLTWSCDGNTK</sequence>